<sequence>MYLLSPRNGDEEDEQEEIQELISDDEPPNLKLASCATAASSSSSSGSDMEKGRGKACGGGSTAPPPPPPSSSGKSGGGGGSNIREAAASGGGGGVWGKYFSVESLLLLVCVTASLVILPLVLPPLPPPPSMLMLVPVAMLVLLLALAFMPTTTSSSSSAGGGGGGGRNGATTGHAPYL</sequence>
<accession>Q7X6L2</accession>
<accession>A0A0N7KJ43</accession>
<accession>A5X5P3</accession>
<comment type="function">
    <text evidence="5">Promotes both cell expansion and proliferation-dependent organ growth.</text>
</comment>
<comment type="subcellular location">
    <subcellularLocation>
        <location evidence="5">Membrane</location>
        <topology evidence="5">Multi-pass membrane protein</topology>
    </subcellularLocation>
    <subcellularLocation>
        <location evidence="5">Nucleus</location>
    </subcellularLocation>
    <subcellularLocation>
        <location evidence="5">Cytoplasm</location>
    </subcellularLocation>
    <subcellularLocation>
        <location evidence="2">Endoplasmic reticulum</location>
    </subcellularLocation>
</comment>
<comment type="tissue specificity">
    <text evidence="5">Mostly expressed in young tissues such as young roots, young leaves, and seeds. Also present in stems, mature leaves, and spikelets.</text>
</comment>
<comment type="induction">
    <text evidence="5">By auxin (e.g. NAA) and cytokinin (e.g. 6-benzylaminopurine (6-BA)).</text>
</comment>
<comment type="domain">
    <text evidence="1">The OSR domain is sufficient to promote organ growth.</text>
</comment>
<comment type="similarity">
    <text evidence="6">Belongs to the plant organ size related (OSR) protein family.</text>
</comment>
<feature type="chain" id="PRO_0000423598" description="Protein AUXIN-REGULATED GENE INVOLVED IN ORGAN SIZE">
    <location>
        <begin position="1"/>
        <end position="178"/>
    </location>
</feature>
<feature type="transmembrane region" description="Helical" evidence="3">
    <location>
        <begin position="105"/>
        <end position="125"/>
    </location>
</feature>
<feature type="transmembrane region" description="Helical" evidence="3">
    <location>
        <begin position="131"/>
        <end position="151"/>
    </location>
</feature>
<feature type="region of interest" description="Disordered" evidence="4">
    <location>
        <begin position="1"/>
        <end position="85"/>
    </location>
</feature>
<feature type="region of interest" description="Organ Size Related (OSR) domain" evidence="1">
    <location>
        <begin position="100"/>
        <end position="151"/>
    </location>
</feature>
<feature type="region of interest" description="Disordered" evidence="4">
    <location>
        <begin position="153"/>
        <end position="178"/>
    </location>
</feature>
<feature type="compositionally biased region" description="Acidic residues" evidence="4">
    <location>
        <begin position="10"/>
        <end position="27"/>
    </location>
</feature>
<feature type="compositionally biased region" description="Low complexity" evidence="4">
    <location>
        <begin position="33"/>
        <end position="47"/>
    </location>
</feature>
<feature type="compositionally biased region" description="Gly residues" evidence="4">
    <location>
        <begin position="159"/>
        <end position="168"/>
    </location>
</feature>
<feature type="compositionally biased region" description="Low complexity" evidence="4">
    <location>
        <begin position="169"/>
        <end position="178"/>
    </location>
</feature>
<feature type="sequence conflict" description="In Ref. 1; ABG23244." evidence="6" ref="1">
    <original>E</original>
    <variation>G</variation>
    <location>
        <position position="20"/>
    </location>
</feature>
<dbReference type="EMBL" id="DQ641272">
    <property type="protein sequence ID" value="ABG23244.1"/>
    <property type="molecule type" value="mRNA"/>
</dbReference>
<dbReference type="EMBL" id="AL731593">
    <property type="protein sequence ID" value="CAD40975.1"/>
    <property type="molecule type" value="Genomic_DNA"/>
</dbReference>
<dbReference type="EMBL" id="AL731606">
    <property type="protein sequence ID" value="CAE02430.1"/>
    <property type="molecule type" value="Genomic_DNA"/>
</dbReference>
<dbReference type="EMBL" id="AP008210">
    <property type="protein sequence ID" value="BAF14806.1"/>
    <property type="molecule type" value="Genomic_DNA"/>
</dbReference>
<dbReference type="EMBL" id="AP014960">
    <property type="protein sequence ID" value="BAS89377.1"/>
    <property type="molecule type" value="Genomic_DNA"/>
</dbReference>
<dbReference type="EMBL" id="AK102641">
    <property type="protein sequence ID" value="BAG95653.1"/>
    <property type="molecule type" value="mRNA"/>
</dbReference>
<dbReference type="RefSeq" id="XP_015634098.1">
    <property type="nucleotide sequence ID" value="XM_015778612.1"/>
</dbReference>
<dbReference type="RefSeq" id="XP_015634099.1">
    <property type="nucleotide sequence ID" value="XM_015778613.1"/>
</dbReference>
<dbReference type="STRING" id="39947.Q7X6L2"/>
<dbReference type="PaxDb" id="39947-Q7X6L2"/>
<dbReference type="EnsemblPlants" id="Os04t0444300-01">
    <property type="protein sequence ID" value="Os04t0444300-01"/>
    <property type="gene ID" value="Os04g0444300"/>
</dbReference>
<dbReference type="GeneID" id="4335949"/>
<dbReference type="Gramene" id="Os04t0444300-01">
    <property type="protein sequence ID" value="Os04t0444300-01"/>
    <property type="gene ID" value="Os04g0444300"/>
</dbReference>
<dbReference type="KEGG" id="dosa:Os04g0444300"/>
<dbReference type="KEGG" id="osa:4335949"/>
<dbReference type="HOGENOM" id="CLU_129551_0_0_1"/>
<dbReference type="InParanoid" id="Q7X6L2"/>
<dbReference type="OMA" id="ATHXGRR"/>
<dbReference type="Proteomes" id="UP000000763">
    <property type="component" value="Chromosome 4"/>
</dbReference>
<dbReference type="Proteomes" id="UP000059680">
    <property type="component" value="Chromosome 4"/>
</dbReference>
<dbReference type="GO" id="GO:0005737">
    <property type="term" value="C:cytoplasm"/>
    <property type="evidence" value="ECO:0000314"/>
    <property type="project" value="UniProtKB"/>
</dbReference>
<dbReference type="GO" id="GO:0005783">
    <property type="term" value="C:endoplasmic reticulum"/>
    <property type="evidence" value="ECO:0007669"/>
    <property type="project" value="UniProtKB-SubCell"/>
</dbReference>
<dbReference type="GO" id="GO:0016020">
    <property type="term" value="C:membrane"/>
    <property type="evidence" value="ECO:0000314"/>
    <property type="project" value="UniProtKB"/>
</dbReference>
<dbReference type="GO" id="GO:0005634">
    <property type="term" value="C:nucleus"/>
    <property type="evidence" value="ECO:0000314"/>
    <property type="project" value="UniProtKB"/>
</dbReference>
<dbReference type="GO" id="GO:0071365">
    <property type="term" value="P:cellular response to auxin stimulus"/>
    <property type="evidence" value="ECO:0000270"/>
    <property type="project" value="UniProtKB"/>
</dbReference>
<dbReference type="GO" id="GO:0071368">
    <property type="term" value="P:cellular response to cytokinin stimulus"/>
    <property type="evidence" value="ECO:0000270"/>
    <property type="project" value="UniProtKB"/>
</dbReference>
<dbReference type="GO" id="GO:0030307">
    <property type="term" value="P:positive regulation of cell growth"/>
    <property type="evidence" value="ECO:0000314"/>
    <property type="project" value="UniProtKB"/>
</dbReference>
<dbReference type="GO" id="GO:0008284">
    <property type="term" value="P:positive regulation of cell population proliferation"/>
    <property type="evidence" value="ECO:0000314"/>
    <property type="project" value="UniProtKB"/>
</dbReference>
<dbReference type="GO" id="GO:0046622">
    <property type="term" value="P:positive regulation of organ growth"/>
    <property type="evidence" value="ECO:0000314"/>
    <property type="project" value="UniProtKB"/>
</dbReference>
<dbReference type="InterPro" id="IPR037468">
    <property type="entry name" value="ARGOS/ARL/OSR1"/>
</dbReference>
<dbReference type="PANTHER" id="PTHR36023">
    <property type="entry name" value="ARGOS-LIKE PROTEIN"/>
    <property type="match status" value="1"/>
</dbReference>
<dbReference type="PANTHER" id="PTHR36023:SF1">
    <property type="entry name" value="PROTEIN AUXIN-REGULATED GENE INVOLVED IN ORGAN SIZE"/>
    <property type="match status" value="1"/>
</dbReference>
<keyword id="KW-0963">Cytoplasm</keyword>
<keyword id="KW-0217">Developmental protein</keyword>
<keyword id="KW-0256">Endoplasmic reticulum</keyword>
<keyword id="KW-0472">Membrane</keyword>
<keyword id="KW-0539">Nucleus</keyword>
<keyword id="KW-1185">Reference proteome</keyword>
<keyword id="KW-0812">Transmembrane</keyword>
<keyword id="KW-1133">Transmembrane helix</keyword>
<proteinExistence type="evidence at transcript level"/>
<reference key="1">
    <citation type="journal article" date="2009" name="J. Genet. Genomics">
        <title>Expression of a rice OsARGOS gene in Arabidopsis promotes cell division and expansion and increases organ size.</title>
        <authorList>
            <person name="Wang B."/>
            <person name="Sang Y."/>
            <person name="Song J."/>
            <person name="Gao X.-Q."/>
            <person name="Zhang X."/>
        </authorList>
    </citation>
    <scope>NUCLEOTIDE SEQUENCE [MRNA]</scope>
    <scope>FUNCTION</scope>
    <scope>TISSUE SPECIFICITY</scope>
    <scope>INDUCTION BY AUXIN AND CYTOKININ</scope>
    <scope>SUBCELLULAR LOCATION</scope>
    <source>
        <strain>cv. Zhonghua 11</strain>
        <tissue>Leaf</tissue>
    </source>
</reference>
<reference key="2">
    <citation type="journal article" date="2002" name="Nature">
        <title>Sequence and analysis of rice chromosome 4.</title>
        <authorList>
            <person name="Feng Q."/>
            <person name="Zhang Y."/>
            <person name="Hao P."/>
            <person name="Wang S."/>
            <person name="Fu G."/>
            <person name="Huang Y."/>
            <person name="Li Y."/>
            <person name="Zhu J."/>
            <person name="Liu Y."/>
            <person name="Hu X."/>
            <person name="Jia P."/>
            <person name="Zhang Y."/>
            <person name="Zhao Q."/>
            <person name="Ying K."/>
            <person name="Yu S."/>
            <person name="Tang Y."/>
            <person name="Weng Q."/>
            <person name="Zhang L."/>
            <person name="Lu Y."/>
            <person name="Mu J."/>
            <person name="Lu Y."/>
            <person name="Zhang L.S."/>
            <person name="Yu Z."/>
            <person name="Fan D."/>
            <person name="Liu X."/>
            <person name="Lu T."/>
            <person name="Li C."/>
            <person name="Wu Y."/>
            <person name="Sun T."/>
            <person name="Lei H."/>
            <person name="Li T."/>
            <person name="Hu H."/>
            <person name="Guan J."/>
            <person name="Wu M."/>
            <person name="Zhang R."/>
            <person name="Zhou B."/>
            <person name="Chen Z."/>
            <person name="Chen L."/>
            <person name="Jin Z."/>
            <person name="Wang R."/>
            <person name="Yin H."/>
            <person name="Cai Z."/>
            <person name="Ren S."/>
            <person name="Lv G."/>
            <person name="Gu W."/>
            <person name="Zhu G."/>
            <person name="Tu Y."/>
            <person name="Jia J."/>
            <person name="Zhang Y."/>
            <person name="Chen J."/>
            <person name="Kang H."/>
            <person name="Chen X."/>
            <person name="Shao C."/>
            <person name="Sun Y."/>
            <person name="Hu Q."/>
            <person name="Zhang X."/>
            <person name="Zhang W."/>
            <person name="Wang L."/>
            <person name="Ding C."/>
            <person name="Sheng H."/>
            <person name="Gu J."/>
            <person name="Chen S."/>
            <person name="Ni L."/>
            <person name="Zhu F."/>
            <person name="Chen W."/>
            <person name="Lan L."/>
            <person name="Lai Y."/>
            <person name="Cheng Z."/>
            <person name="Gu M."/>
            <person name="Jiang J."/>
            <person name="Li J."/>
            <person name="Hong G."/>
            <person name="Xue Y."/>
            <person name="Han B."/>
        </authorList>
    </citation>
    <scope>NUCLEOTIDE SEQUENCE [LARGE SCALE GENOMIC DNA]</scope>
    <source>
        <strain>cv. Nipponbare</strain>
    </source>
</reference>
<reference key="3">
    <citation type="journal article" date="2005" name="Nature">
        <title>The map-based sequence of the rice genome.</title>
        <authorList>
            <consortium name="International rice genome sequencing project (IRGSP)"/>
        </authorList>
    </citation>
    <scope>NUCLEOTIDE SEQUENCE [LARGE SCALE GENOMIC DNA]</scope>
    <source>
        <strain>cv. Nipponbare</strain>
    </source>
</reference>
<reference key="4">
    <citation type="journal article" date="2008" name="Nucleic Acids Res.">
        <title>The rice annotation project database (RAP-DB): 2008 update.</title>
        <authorList>
            <consortium name="The rice annotation project (RAP)"/>
        </authorList>
    </citation>
    <scope>GENOME REANNOTATION</scope>
    <source>
        <strain>cv. Nipponbare</strain>
    </source>
</reference>
<reference key="5">
    <citation type="journal article" date="2013" name="Rice">
        <title>Improvement of the Oryza sativa Nipponbare reference genome using next generation sequence and optical map data.</title>
        <authorList>
            <person name="Kawahara Y."/>
            <person name="de la Bastide M."/>
            <person name="Hamilton J.P."/>
            <person name="Kanamori H."/>
            <person name="McCombie W.R."/>
            <person name="Ouyang S."/>
            <person name="Schwartz D.C."/>
            <person name="Tanaka T."/>
            <person name="Wu J."/>
            <person name="Zhou S."/>
            <person name="Childs K.L."/>
            <person name="Davidson R.M."/>
            <person name="Lin H."/>
            <person name="Quesada-Ocampo L."/>
            <person name="Vaillancourt B."/>
            <person name="Sakai H."/>
            <person name="Lee S.S."/>
            <person name="Kim J."/>
            <person name="Numa H."/>
            <person name="Itoh T."/>
            <person name="Buell C.R."/>
            <person name="Matsumoto T."/>
        </authorList>
    </citation>
    <scope>GENOME REANNOTATION</scope>
    <source>
        <strain>cv. Nipponbare</strain>
    </source>
</reference>
<reference key="6">
    <citation type="journal article" date="2003" name="Science">
        <title>Collection, mapping, and annotation of over 28,000 cDNA clones from japonica rice.</title>
        <authorList>
            <consortium name="The rice full-length cDNA consortium"/>
        </authorList>
    </citation>
    <scope>NUCLEOTIDE SEQUENCE [LARGE SCALE MRNA]</scope>
    <source>
        <strain>cv. Nipponbare</strain>
    </source>
</reference>
<name>ARGOS_ORYSJ</name>
<evidence type="ECO:0000250" key="1"/>
<evidence type="ECO:0000250" key="2">
    <source>
        <dbReference type="UniProtKB" id="Q6NMD6"/>
    </source>
</evidence>
<evidence type="ECO:0000255" key="3"/>
<evidence type="ECO:0000256" key="4">
    <source>
        <dbReference type="SAM" id="MobiDB-lite"/>
    </source>
</evidence>
<evidence type="ECO:0000269" key="5">
    <source>
    </source>
</evidence>
<evidence type="ECO:0000305" key="6"/>
<gene>
    <name type="primary">ARGOS</name>
    <name type="ordered locus">Os04g0444300</name>
    <name type="ordered locus">LOC_Os04g36670</name>
    <name type="ORF">OSJNBa0027P08.2</name>
    <name type="ORF">OSJNBa0058G03.5</name>
</gene>
<organism>
    <name type="scientific">Oryza sativa subsp. japonica</name>
    <name type="common">Rice</name>
    <dbReference type="NCBI Taxonomy" id="39947"/>
    <lineage>
        <taxon>Eukaryota</taxon>
        <taxon>Viridiplantae</taxon>
        <taxon>Streptophyta</taxon>
        <taxon>Embryophyta</taxon>
        <taxon>Tracheophyta</taxon>
        <taxon>Spermatophyta</taxon>
        <taxon>Magnoliopsida</taxon>
        <taxon>Liliopsida</taxon>
        <taxon>Poales</taxon>
        <taxon>Poaceae</taxon>
        <taxon>BOP clade</taxon>
        <taxon>Oryzoideae</taxon>
        <taxon>Oryzeae</taxon>
        <taxon>Oryzinae</taxon>
        <taxon>Oryza</taxon>
        <taxon>Oryza sativa</taxon>
    </lineage>
</organism>
<protein>
    <recommendedName>
        <fullName>Protein AUXIN-REGULATED GENE INVOLVED IN ORGAN SIZE</fullName>
        <shortName>OsARGOS</shortName>
    </recommendedName>
</protein>